<keyword id="KW-1003">Cell membrane</keyword>
<keyword id="KW-1015">Disulfide bond</keyword>
<keyword id="KW-0297">G-protein coupled receptor</keyword>
<keyword id="KW-0325">Glycoprotein</keyword>
<keyword id="KW-0449">Lipoprotein</keyword>
<keyword id="KW-0472">Membrane</keyword>
<keyword id="KW-0564">Palmitate</keyword>
<keyword id="KW-0675">Receptor</keyword>
<keyword id="KW-1185">Reference proteome</keyword>
<keyword id="KW-0807">Transducer</keyword>
<keyword id="KW-0812">Transmembrane</keyword>
<keyword id="KW-1133">Transmembrane helix</keyword>
<gene>
    <name type="primary">Tacr1</name>
    <name type="synonym">Tac1r</name>
</gene>
<accession>P14600</accession>
<proteinExistence type="evidence at transcript level"/>
<comment type="function">
    <text>This is a receptor for the tachykinin neuropeptide substance P. It is probably associated with G proteins that activate a phosphatidylinositol-calcium second messenger system. The rank order of affinity of this receptor to tachykinins is: substance P &gt; substance K &gt; neuromedin-K.</text>
</comment>
<comment type="subunit">
    <text>Interacts with ARRB1.</text>
</comment>
<comment type="subcellular location">
    <subcellularLocation>
        <location>Cell membrane</location>
        <topology>Multi-pass membrane protein</topology>
    </subcellularLocation>
</comment>
<comment type="similarity">
    <text evidence="2">Belongs to the G-protein coupled receptor 1 family.</text>
</comment>
<sequence length="407" mass="46366">MDNVLPMDSDLFPNISTNTSESNQFVQPTWQIVLWAAAYTVIVVTSVVGNVVVIWIILAHKRMRTVTNYFLVNLAFAEACMAAFNTVVNFTYAVHNVWYYGLFYCKFHNFFPIAALFASIYSMTAVAFDRYMAIIHPLQPRLSATATKVVIFVIWVLALLLAFPQGYYSTTETMPSRVVCMIEWPEHPNRTYEKAYHICVTVLIYFLPLLVIGYAYTVVGITLWASEIPGDSSDRYHEQVSAKRKVVKMMIVVVCTFAICWLPFHVFFLLPYINPDLYLKKFIQQVYLASMWLAMSSTMYNPIIYCCLNDRFRLGFKHAFRCCPFISAGDYEGLEMKSTRYLQTQSSVYKVSRLETTISTVVGAHEEEPEEGPKATPSSLDLTSNGSSRSNSKTMTESSSFYSNMLA</sequence>
<feature type="chain" id="PRO_0000069888" description="Substance-P receptor">
    <location>
        <begin position="1"/>
        <end position="407"/>
    </location>
</feature>
<feature type="topological domain" description="Extracellular" evidence="1">
    <location>
        <begin position="1"/>
        <end position="31"/>
    </location>
</feature>
<feature type="transmembrane region" description="Helical; Name=1" evidence="1">
    <location>
        <begin position="32"/>
        <end position="54"/>
    </location>
</feature>
<feature type="topological domain" description="Cytoplasmic" evidence="1">
    <location>
        <begin position="55"/>
        <end position="64"/>
    </location>
</feature>
<feature type="transmembrane region" description="Helical; Name=2" evidence="1">
    <location>
        <begin position="65"/>
        <end position="86"/>
    </location>
</feature>
<feature type="topological domain" description="Extracellular" evidence="1">
    <location>
        <begin position="87"/>
        <end position="106"/>
    </location>
</feature>
<feature type="transmembrane region" description="Helical; Name=3" evidence="1">
    <location>
        <begin position="107"/>
        <end position="128"/>
    </location>
</feature>
<feature type="topological domain" description="Cytoplasmic" evidence="1">
    <location>
        <begin position="129"/>
        <end position="148"/>
    </location>
</feature>
<feature type="transmembrane region" description="Helical; Name=4" evidence="1">
    <location>
        <begin position="149"/>
        <end position="169"/>
    </location>
</feature>
<feature type="topological domain" description="Extracellular" evidence="1">
    <location>
        <begin position="170"/>
        <end position="194"/>
    </location>
</feature>
<feature type="transmembrane region" description="Helical; Name=5" evidence="1">
    <location>
        <begin position="195"/>
        <end position="219"/>
    </location>
</feature>
<feature type="topological domain" description="Cytoplasmic" evidence="1">
    <location>
        <begin position="220"/>
        <end position="248"/>
    </location>
</feature>
<feature type="transmembrane region" description="Helical; Name=6" evidence="1">
    <location>
        <begin position="249"/>
        <end position="270"/>
    </location>
</feature>
<feature type="topological domain" description="Extracellular" evidence="1">
    <location>
        <begin position="271"/>
        <end position="283"/>
    </location>
</feature>
<feature type="transmembrane region" description="Helical; Name=7" evidence="1">
    <location>
        <begin position="284"/>
        <end position="308"/>
    </location>
</feature>
<feature type="topological domain" description="Cytoplasmic" evidence="1">
    <location>
        <begin position="309"/>
        <end position="407"/>
    </location>
</feature>
<feature type="region of interest" description="Disordered" evidence="3">
    <location>
        <begin position="362"/>
        <end position="407"/>
    </location>
</feature>
<feature type="compositionally biased region" description="Polar residues" evidence="3">
    <location>
        <begin position="376"/>
        <end position="407"/>
    </location>
</feature>
<feature type="lipid moiety-binding region" description="S-palmitoyl cysteine" evidence="1">
    <location>
        <position position="322"/>
    </location>
</feature>
<feature type="glycosylation site" description="N-linked (GlcNAc...) asparagine" evidence="1">
    <location>
        <position position="14"/>
    </location>
</feature>
<feature type="glycosylation site" description="N-linked (GlcNAc...) asparagine" evidence="1">
    <location>
        <position position="18"/>
    </location>
</feature>
<feature type="disulfide bond" evidence="2">
    <location>
        <begin position="105"/>
        <end position="180"/>
    </location>
</feature>
<feature type="sequence conflict" description="In Ref. 3; AAB59726." evidence="4" ref="3">
    <original>N</original>
    <variation>D</variation>
    <location>
        <position position="73"/>
    </location>
</feature>
<organism>
    <name type="scientific">Rattus norvegicus</name>
    <name type="common">Rat</name>
    <dbReference type="NCBI Taxonomy" id="10116"/>
    <lineage>
        <taxon>Eukaryota</taxon>
        <taxon>Metazoa</taxon>
        <taxon>Chordata</taxon>
        <taxon>Craniata</taxon>
        <taxon>Vertebrata</taxon>
        <taxon>Euteleostomi</taxon>
        <taxon>Mammalia</taxon>
        <taxon>Eutheria</taxon>
        <taxon>Euarchontoglires</taxon>
        <taxon>Glires</taxon>
        <taxon>Rodentia</taxon>
        <taxon>Myomorpha</taxon>
        <taxon>Muroidea</taxon>
        <taxon>Muridae</taxon>
        <taxon>Murinae</taxon>
        <taxon>Rattus</taxon>
    </lineage>
</organism>
<protein>
    <recommendedName>
        <fullName>Substance-P receptor</fullName>
        <shortName>SPR</shortName>
    </recommendedName>
    <alternativeName>
        <fullName>NK-1 receptor</fullName>
        <shortName>NK-1R</shortName>
    </alternativeName>
    <alternativeName>
        <fullName>Tachykinin receptor 1</fullName>
    </alternativeName>
</protein>
<evidence type="ECO:0000255" key="1"/>
<evidence type="ECO:0000255" key="2">
    <source>
        <dbReference type="PROSITE-ProRule" id="PRU00521"/>
    </source>
</evidence>
<evidence type="ECO:0000256" key="3">
    <source>
        <dbReference type="SAM" id="MobiDB-lite"/>
    </source>
</evidence>
<evidence type="ECO:0000305" key="4"/>
<dbReference type="EMBL" id="M64236">
    <property type="protein sequence ID" value="AAA42176.1"/>
    <property type="molecule type" value="Genomic_DNA"/>
</dbReference>
<dbReference type="EMBL" id="M64232">
    <property type="protein sequence ID" value="AAA42176.1"/>
    <property type="status" value="JOINED"/>
    <property type="molecule type" value="Genomic_DNA"/>
</dbReference>
<dbReference type="EMBL" id="M64233">
    <property type="protein sequence ID" value="AAA42176.1"/>
    <property type="status" value="JOINED"/>
    <property type="molecule type" value="Genomic_DNA"/>
</dbReference>
<dbReference type="EMBL" id="M64234">
    <property type="protein sequence ID" value="AAA42176.1"/>
    <property type="status" value="JOINED"/>
    <property type="molecule type" value="Genomic_DNA"/>
</dbReference>
<dbReference type="EMBL" id="M64235">
    <property type="protein sequence ID" value="AAA42176.1"/>
    <property type="status" value="JOINED"/>
    <property type="molecule type" value="Genomic_DNA"/>
</dbReference>
<dbReference type="EMBL" id="J05097">
    <property type="protein sequence ID" value="AAA42175.1"/>
    <property type="molecule type" value="mRNA"/>
</dbReference>
<dbReference type="EMBL" id="M31477">
    <property type="protein sequence ID" value="AAB59726.1"/>
    <property type="molecule type" value="mRNA"/>
</dbReference>
<dbReference type="PIR" id="A38692">
    <property type="entry name" value="A34357"/>
</dbReference>
<dbReference type="RefSeq" id="NP_036799.1">
    <property type="nucleotide sequence ID" value="NM_012667.3"/>
</dbReference>
<dbReference type="SMR" id="P14600"/>
<dbReference type="BioGRID" id="246930">
    <property type="interactions" value="2"/>
</dbReference>
<dbReference type="FunCoup" id="P14600">
    <property type="interactions" value="699"/>
</dbReference>
<dbReference type="STRING" id="10116.ENSRNOP00000007984"/>
<dbReference type="BindingDB" id="P14600"/>
<dbReference type="ChEMBL" id="CHEMBL4027"/>
<dbReference type="GuidetoPHARMACOLOGY" id="360"/>
<dbReference type="GlyCosmos" id="P14600">
    <property type="glycosylation" value="2 sites, No reported glycans"/>
</dbReference>
<dbReference type="GlyGen" id="P14600">
    <property type="glycosylation" value="3 sites"/>
</dbReference>
<dbReference type="PhosphoSitePlus" id="P14600"/>
<dbReference type="PaxDb" id="10116-ENSRNOP00000007984"/>
<dbReference type="Ensembl" id="ENSRNOT00000007984.6">
    <property type="protein sequence ID" value="ENSRNOP00000007984.2"/>
    <property type="gene ID" value="ENSRNOG00000005853.6"/>
</dbReference>
<dbReference type="GeneID" id="24807"/>
<dbReference type="KEGG" id="rno:24807"/>
<dbReference type="UCSC" id="RGD:3811">
    <property type="organism name" value="rat"/>
</dbReference>
<dbReference type="AGR" id="RGD:3811"/>
<dbReference type="CTD" id="6869"/>
<dbReference type="RGD" id="3811">
    <property type="gene designation" value="Tacr1"/>
</dbReference>
<dbReference type="eggNOG" id="KOG4219">
    <property type="taxonomic scope" value="Eukaryota"/>
</dbReference>
<dbReference type="GeneTree" id="ENSGT00940000153745"/>
<dbReference type="HOGENOM" id="CLU_009579_6_1_1"/>
<dbReference type="InParanoid" id="P14600"/>
<dbReference type="OMA" id="CMIKWPE"/>
<dbReference type="OrthoDB" id="5981855at2759"/>
<dbReference type="PhylomeDB" id="P14600"/>
<dbReference type="TreeFam" id="TF315303"/>
<dbReference type="Reactome" id="R-RNO-380095">
    <property type="pathway name" value="Tachykinin receptors bind tachykinins"/>
</dbReference>
<dbReference type="Reactome" id="R-RNO-416476">
    <property type="pathway name" value="G alpha (q) signalling events"/>
</dbReference>
<dbReference type="Reactome" id="R-RNO-8856825">
    <property type="pathway name" value="Cargo recognition for clathrin-mediated endocytosis"/>
</dbReference>
<dbReference type="Reactome" id="R-RNO-8856828">
    <property type="pathway name" value="Clathrin-mediated endocytosis"/>
</dbReference>
<dbReference type="PRO" id="PR:P14600"/>
<dbReference type="Proteomes" id="UP000002494">
    <property type="component" value="Chromosome 4"/>
</dbReference>
<dbReference type="Bgee" id="ENSRNOG00000005853">
    <property type="expression patterns" value="Expressed in duodenum and 9 other cell types or tissues"/>
</dbReference>
<dbReference type="GO" id="GO:0044297">
    <property type="term" value="C:cell body"/>
    <property type="evidence" value="ECO:0000314"/>
    <property type="project" value="RGD"/>
</dbReference>
<dbReference type="GO" id="GO:0071944">
    <property type="term" value="C:cell periphery"/>
    <property type="evidence" value="ECO:0000266"/>
    <property type="project" value="RGD"/>
</dbReference>
<dbReference type="GO" id="GO:0009986">
    <property type="term" value="C:cell surface"/>
    <property type="evidence" value="ECO:0000314"/>
    <property type="project" value="RGD"/>
</dbReference>
<dbReference type="GO" id="GO:0030425">
    <property type="term" value="C:dendrite"/>
    <property type="evidence" value="ECO:0000314"/>
    <property type="project" value="RGD"/>
</dbReference>
<dbReference type="GO" id="GO:0005886">
    <property type="term" value="C:plasma membrane"/>
    <property type="evidence" value="ECO:0000266"/>
    <property type="project" value="RGD"/>
</dbReference>
<dbReference type="GO" id="GO:0045211">
    <property type="term" value="C:postsynaptic membrane"/>
    <property type="evidence" value="ECO:0000314"/>
    <property type="project" value="SynGO"/>
</dbReference>
<dbReference type="GO" id="GO:0036126">
    <property type="term" value="C:sperm flagellum"/>
    <property type="evidence" value="ECO:0000266"/>
    <property type="project" value="RGD"/>
</dbReference>
<dbReference type="GO" id="GO:0061827">
    <property type="term" value="C:sperm head"/>
    <property type="evidence" value="ECO:0000266"/>
    <property type="project" value="RGD"/>
</dbReference>
<dbReference type="GO" id="GO:0097225">
    <property type="term" value="C:sperm midpiece"/>
    <property type="evidence" value="ECO:0000266"/>
    <property type="project" value="RGD"/>
</dbReference>
<dbReference type="GO" id="GO:0016496">
    <property type="term" value="F:substance P receptor activity"/>
    <property type="evidence" value="ECO:0000314"/>
    <property type="project" value="RGD"/>
</dbReference>
<dbReference type="GO" id="GO:0002118">
    <property type="term" value="P:aggressive behavior"/>
    <property type="evidence" value="ECO:0000315"/>
    <property type="project" value="RGD"/>
</dbReference>
<dbReference type="GO" id="GO:0003051">
    <property type="term" value="P:angiotensin-mediated drinking behavior"/>
    <property type="evidence" value="ECO:0000315"/>
    <property type="project" value="RGD"/>
</dbReference>
<dbReference type="GO" id="GO:0008306">
    <property type="term" value="P:associative learning"/>
    <property type="evidence" value="ECO:0000315"/>
    <property type="project" value="RGD"/>
</dbReference>
<dbReference type="GO" id="GO:0048266">
    <property type="term" value="P:behavioral response to pain"/>
    <property type="evidence" value="ECO:0000315"/>
    <property type="project" value="RGD"/>
</dbReference>
<dbReference type="GO" id="GO:0042755">
    <property type="term" value="P:eating behavior"/>
    <property type="evidence" value="ECO:0000315"/>
    <property type="project" value="RGD"/>
</dbReference>
<dbReference type="GO" id="GO:0007611">
    <property type="term" value="P:learning or memory"/>
    <property type="evidence" value="ECO:0000315"/>
    <property type="project" value="RGD"/>
</dbReference>
<dbReference type="GO" id="GO:0007616">
    <property type="term" value="P:long-term memory"/>
    <property type="evidence" value="ECO:0000315"/>
    <property type="project" value="RGD"/>
</dbReference>
<dbReference type="GO" id="GO:0007218">
    <property type="term" value="P:neuropeptide signaling pathway"/>
    <property type="evidence" value="ECO:0000304"/>
    <property type="project" value="RGD"/>
</dbReference>
<dbReference type="GO" id="GO:0035106">
    <property type="term" value="P:operant conditioning"/>
    <property type="evidence" value="ECO:0000315"/>
    <property type="project" value="RGD"/>
</dbReference>
<dbReference type="GO" id="GO:0045760">
    <property type="term" value="P:positive regulation of action potential"/>
    <property type="evidence" value="ECO:0000315"/>
    <property type="project" value="RGD"/>
</dbReference>
<dbReference type="GO" id="GO:0045777">
    <property type="term" value="P:positive regulation of blood pressure"/>
    <property type="evidence" value="ECO:0000315"/>
    <property type="project" value="RGD"/>
</dbReference>
<dbReference type="GO" id="GO:0007204">
    <property type="term" value="P:positive regulation of cytosolic calcium ion concentration"/>
    <property type="evidence" value="ECO:0000315"/>
    <property type="project" value="RGD"/>
</dbReference>
<dbReference type="GO" id="GO:0010634">
    <property type="term" value="P:positive regulation of epithelial cell migration"/>
    <property type="evidence" value="ECO:0000315"/>
    <property type="project" value="RGD"/>
</dbReference>
<dbReference type="GO" id="GO:0050679">
    <property type="term" value="P:positive regulation of epithelial cell proliferation"/>
    <property type="evidence" value="ECO:0000315"/>
    <property type="project" value="RGD"/>
</dbReference>
<dbReference type="GO" id="GO:1902093">
    <property type="term" value="P:positive regulation of flagellated sperm motility"/>
    <property type="evidence" value="ECO:0000266"/>
    <property type="project" value="RGD"/>
</dbReference>
<dbReference type="GO" id="GO:0046887">
    <property type="term" value="P:positive regulation of hormone secretion"/>
    <property type="evidence" value="ECO:0000315"/>
    <property type="project" value="RGD"/>
</dbReference>
<dbReference type="GO" id="GO:0002687">
    <property type="term" value="P:positive regulation of leukocyte migration"/>
    <property type="evidence" value="ECO:0000315"/>
    <property type="project" value="RGD"/>
</dbReference>
<dbReference type="GO" id="GO:0050671">
    <property type="term" value="P:positive regulation of lymphocyte proliferation"/>
    <property type="evidence" value="ECO:0000315"/>
    <property type="project" value="RGD"/>
</dbReference>
<dbReference type="GO" id="GO:0045778">
    <property type="term" value="P:positive regulation of ossification"/>
    <property type="evidence" value="ECO:0000315"/>
    <property type="project" value="RGD"/>
</dbReference>
<dbReference type="GO" id="GO:0051496">
    <property type="term" value="P:positive regulation of stress fiber assembly"/>
    <property type="evidence" value="ECO:0000315"/>
    <property type="project" value="RGD"/>
</dbReference>
<dbReference type="GO" id="GO:0032224">
    <property type="term" value="P:positive regulation of synaptic transmission, cholinergic"/>
    <property type="evidence" value="ECO:0000315"/>
    <property type="project" value="RGD"/>
</dbReference>
<dbReference type="GO" id="GO:0032230">
    <property type="term" value="P:positive regulation of synaptic transmission, GABAergic"/>
    <property type="evidence" value="ECO:0000315"/>
    <property type="project" value="RGD"/>
</dbReference>
<dbReference type="GO" id="GO:0070474">
    <property type="term" value="P:positive regulation of uterine smooth muscle contraction"/>
    <property type="evidence" value="ECO:0000314"/>
    <property type="project" value="RGD"/>
</dbReference>
<dbReference type="GO" id="GO:0043117">
    <property type="term" value="P:positive regulation of vascular permeability"/>
    <property type="evidence" value="ECO:0000315"/>
    <property type="project" value="RGD"/>
</dbReference>
<dbReference type="GO" id="GO:0045907">
    <property type="term" value="P:positive regulation of vasoconstriction"/>
    <property type="evidence" value="ECO:0000315"/>
    <property type="project" value="RGD"/>
</dbReference>
<dbReference type="GO" id="GO:0008217">
    <property type="term" value="P:regulation of blood pressure"/>
    <property type="evidence" value="ECO:0000315"/>
    <property type="project" value="RGD"/>
</dbReference>
<dbReference type="GO" id="GO:0014910">
    <property type="term" value="P:regulation of smooth muscle cell migration"/>
    <property type="evidence" value="ECO:0000315"/>
    <property type="project" value="RGD"/>
</dbReference>
<dbReference type="GO" id="GO:0048660">
    <property type="term" value="P:regulation of smooth muscle cell proliferation"/>
    <property type="evidence" value="ECO:0000315"/>
    <property type="project" value="RGD"/>
</dbReference>
<dbReference type="GO" id="GO:0070472">
    <property type="term" value="P:regulation of uterine smooth muscle contraction"/>
    <property type="evidence" value="ECO:0000266"/>
    <property type="project" value="RGD"/>
</dbReference>
<dbReference type="GO" id="GO:0010996">
    <property type="term" value="P:response to auditory stimulus"/>
    <property type="evidence" value="ECO:0000314"/>
    <property type="project" value="RGD"/>
</dbReference>
<dbReference type="GO" id="GO:0051602">
    <property type="term" value="P:response to electrical stimulus"/>
    <property type="evidence" value="ECO:0000270"/>
    <property type="project" value="RGD"/>
</dbReference>
<dbReference type="GO" id="GO:0032355">
    <property type="term" value="P:response to estradiol"/>
    <property type="evidence" value="ECO:0000270"/>
    <property type="project" value="RGD"/>
</dbReference>
<dbReference type="GO" id="GO:0045471">
    <property type="term" value="P:response to ethanol"/>
    <property type="evidence" value="ECO:0000315"/>
    <property type="project" value="RGD"/>
</dbReference>
<dbReference type="GO" id="GO:0009725">
    <property type="term" value="P:response to hormone"/>
    <property type="evidence" value="ECO:0000315"/>
    <property type="project" value="RGD"/>
</dbReference>
<dbReference type="GO" id="GO:0035094">
    <property type="term" value="P:response to nicotine"/>
    <property type="evidence" value="ECO:0000315"/>
    <property type="project" value="RGD"/>
</dbReference>
<dbReference type="GO" id="GO:0010193">
    <property type="term" value="P:response to ozone"/>
    <property type="evidence" value="ECO:0000315"/>
    <property type="project" value="RGD"/>
</dbReference>
<dbReference type="GO" id="GO:0048265">
    <property type="term" value="P:response to pain"/>
    <property type="evidence" value="ECO:0000266"/>
    <property type="project" value="RGD"/>
</dbReference>
<dbReference type="GO" id="GO:0032570">
    <property type="term" value="P:response to progesterone"/>
    <property type="evidence" value="ECO:0000270"/>
    <property type="project" value="RGD"/>
</dbReference>
<dbReference type="GO" id="GO:0060083">
    <property type="term" value="P:smooth muscle contraction involved in micturition"/>
    <property type="evidence" value="ECO:0000315"/>
    <property type="project" value="RGD"/>
</dbReference>
<dbReference type="GO" id="GO:0042713">
    <property type="term" value="P:sperm ejaculation"/>
    <property type="evidence" value="ECO:0000315"/>
    <property type="project" value="RGD"/>
</dbReference>
<dbReference type="GO" id="GO:0007217">
    <property type="term" value="P:tachykinin receptor signaling pathway"/>
    <property type="evidence" value="ECO:0000266"/>
    <property type="project" value="RGD"/>
</dbReference>
<dbReference type="FunFam" id="1.20.1070.10:FF:000078">
    <property type="entry name" value="Neuromedin-K receptor"/>
    <property type="match status" value="1"/>
</dbReference>
<dbReference type="Gene3D" id="1.20.1070.10">
    <property type="entry name" value="Rhodopsin 7-helix transmembrane proteins"/>
    <property type="match status" value="1"/>
</dbReference>
<dbReference type="InterPro" id="IPR000276">
    <property type="entry name" value="GPCR_Rhodpsn"/>
</dbReference>
<dbReference type="InterPro" id="IPR017452">
    <property type="entry name" value="GPCR_Rhodpsn_7TM"/>
</dbReference>
<dbReference type="InterPro" id="IPR001681">
    <property type="entry name" value="Neurokn_rcpt"/>
</dbReference>
<dbReference type="InterPro" id="IPR000046">
    <property type="entry name" value="NK1_rcpt"/>
</dbReference>
<dbReference type="PANTHER" id="PTHR46925">
    <property type="entry name" value="G-PROTEIN COUPLED RECEPTOR TKR-1-RELATED"/>
    <property type="match status" value="1"/>
</dbReference>
<dbReference type="PANTHER" id="PTHR46925:SF4">
    <property type="entry name" value="SUBSTANCE-P RECEPTOR"/>
    <property type="match status" value="1"/>
</dbReference>
<dbReference type="Pfam" id="PF00001">
    <property type="entry name" value="7tm_1"/>
    <property type="match status" value="1"/>
</dbReference>
<dbReference type="PRINTS" id="PR00237">
    <property type="entry name" value="GPCRRHODOPSN"/>
</dbReference>
<dbReference type="PRINTS" id="PR01024">
    <property type="entry name" value="NEUROKININ1R"/>
</dbReference>
<dbReference type="PRINTS" id="PR00244">
    <property type="entry name" value="NEUROKININR"/>
</dbReference>
<dbReference type="SMART" id="SM01381">
    <property type="entry name" value="7TM_GPCR_Srsx"/>
    <property type="match status" value="1"/>
</dbReference>
<dbReference type="SUPFAM" id="SSF81321">
    <property type="entry name" value="Family A G protein-coupled receptor-like"/>
    <property type="match status" value="1"/>
</dbReference>
<dbReference type="PROSITE" id="PS00237">
    <property type="entry name" value="G_PROTEIN_RECEP_F1_1"/>
    <property type="match status" value="1"/>
</dbReference>
<dbReference type="PROSITE" id="PS50262">
    <property type="entry name" value="G_PROTEIN_RECEP_F1_2"/>
    <property type="match status" value="1"/>
</dbReference>
<name>NK1R_RAT</name>
<reference key="1">
    <citation type="journal article" date="1991" name="J. Biol. Chem.">
        <title>Organization, structure, and expression of the gene encoding the rat substance P receptor.</title>
        <authorList>
            <person name="Hershey A.D."/>
            <person name="Dykema P.E."/>
            <person name="Krause J.E."/>
        </authorList>
    </citation>
    <scope>NUCLEOTIDE SEQUENCE [GENOMIC DNA]</scope>
</reference>
<reference key="2">
    <citation type="journal article" date="1989" name="J. Biol. Chem.">
        <title>Molecular characterization of a functional cDNA for rat substance P receptor.</title>
        <authorList>
            <person name="Yokota Y."/>
            <person name="Sasai Y."/>
            <person name="Tanaka K."/>
            <person name="Fujiwara T."/>
            <person name="Tsuchida K."/>
            <person name="Shigemoto R."/>
            <person name="Kakizuka A."/>
            <person name="Ohkubo H."/>
            <person name="Nakanishi S."/>
        </authorList>
    </citation>
    <scope>NUCLEOTIDE SEQUENCE [MRNA]</scope>
</reference>
<reference key="3">
    <citation type="journal article" date="1990" name="Science">
        <title>Molecular characterization of a functional cDNA encoding the rat substance P receptor.</title>
        <authorList>
            <person name="Hershey A.D."/>
            <person name="Krause J.E."/>
        </authorList>
    </citation>
    <scope>NUCLEOTIDE SEQUENCE [GENOMIC DNA]</scope>
    <source>
        <strain>Sprague-Dawley</strain>
    </source>
</reference>
<reference key="4">
    <citation type="submission" date="1996-02" db="EMBL/GenBank/DDBJ databases">
        <authorList>
            <person name="Hershey A.D."/>
        </authorList>
    </citation>
    <scope>SEQUENCE REVISION TO 213</scope>
</reference>